<protein>
    <recommendedName>
        <fullName>Chaperone protein DnaK</fullName>
    </recommendedName>
    <alternativeName>
        <fullName>HSP70</fullName>
    </alternativeName>
    <alternativeName>
        <fullName>Heat shock 70 kDa protein</fullName>
    </alternativeName>
    <alternativeName>
        <fullName>Heat shock protein 70</fullName>
    </alternativeName>
</protein>
<gene>
    <name type="primary">dnaK</name>
    <name type="ordered locus">SAG0097</name>
</gene>
<comment type="function">
    <text evidence="1">Acts as a chaperone.</text>
</comment>
<comment type="induction">
    <text evidence="1">By stress conditions e.g. heat shock (By similarity).</text>
</comment>
<comment type="similarity">
    <text evidence="3">Belongs to the heat shock protein 70 family.</text>
</comment>
<proteinExistence type="inferred from homology"/>
<name>DNAK_STRA5</name>
<reference key="1">
    <citation type="journal article" date="2002" name="Proc. Natl. Acad. Sci. U.S.A.">
        <title>Complete genome sequence and comparative genomic analysis of an emerging human pathogen, serotype V Streptococcus agalactiae.</title>
        <authorList>
            <person name="Tettelin H."/>
            <person name="Masignani V."/>
            <person name="Cieslewicz M.J."/>
            <person name="Eisen J.A."/>
            <person name="Peterson S.N."/>
            <person name="Wessels M.R."/>
            <person name="Paulsen I.T."/>
            <person name="Nelson K.E."/>
            <person name="Margarit I."/>
            <person name="Read T.D."/>
            <person name="Madoff L.C."/>
            <person name="Wolf A.M."/>
            <person name="Beanan M.J."/>
            <person name="Brinkac L.M."/>
            <person name="Daugherty S.C."/>
            <person name="DeBoy R.T."/>
            <person name="Durkin A.S."/>
            <person name="Kolonay J.F."/>
            <person name="Madupu R."/>
            <person name="Lewis M.R."/>
            <person name="Radune D."/>
            <person name="Fedorova N.B."/>
            <person name="Scanlan D."/>
            <person name="Khouri H.M."/>
            <person name="Mulligan S."/>
            <person name="Carty H.A."/>
            <person name="Cline R.T."/>
            <person name="Van Aken S.E."/>
            <person name="Gill J."/>
            <person name="Scarselli M."/>
            <person name="Mora M."/>
            <person name="Iacobini E.T."/>
            <person name="Brettoni C."/>
            <person name="Galli G."/>
            <person name="Mariani M."/>
            <person name="Vegni F."/>
            <person name="Maione D."/>
            <person name="Rinaudo D."/>
            <person name="Rappuoli R."/>
            <person name="Telford J.L."/>
            <person name="Kasper D.L."/>
            <person name="Grandi G."/>
            <person name="Fraser C.M."/>
        </authorList>
    </citation>
    <scope>NUCLEOTIDE SEQUENCE [LARGE SCALE GENOMIC DNA]</scope>
    <source>
        <strain>ATCC BAA-611 / 2603 V/R</strain>
    </source>
</reference>
<keyword id="KW-0067">ATP-binding</keyword>
<keyword id="KW-0143">Chaperone</keyword>
<keyword id="KW-0547">Nucleotide-binding</keyword>
<keyword id="KW-0597">Phosphoprotein</keyword>
<keyword id="KW-1185">Reference proteome</keyword>
<keyword id="KW-0346">Stress response</keyword>
<dbReference type="EMBL" id="AE009948">
    <property type="protein sequence ID" value="AAM99005.1"/>
    <property type="molecule type" value="Genomic_DNA"/>
</dbReference>
<dbReference type="RefSeq" id="NP_687133.1">
    <property type="nucleotide sequence ID" value="NC_004116.1"/>
</dbReference>
<dbReference type="RefSeq" id="WP_000034648.1">
    <property type="nucleotide sequence ID" value="NC_004116.1"/>
</dbReference>
<dbReference type="SMR" id="P0A3J3"/>
<dbReference type="STRING" id="208435.SAG0097"/>
<dbReference type="GeneID" id="66885073"/>
<dbReference type="KEGG" id="sag:SAG0097"/>
<dbReference type="PATRIC" id="fig|208435.3.peg.96"/>
<dbReference type="HOGENOM" id="CLU_005965_2_4_9"/>
<dbReference type="OrthoDB" id="9766019at2"/>
<dbReference type="Proteomes" id="UP000000821">
    <property type="component" value="Chromosome"/>
</dbReference>
<dbReference type="GO" id="GO:0005524">
    <property type="term" value="F:ATP binding"/>
    <property type="evidence" value="ECO:0007669"/>
    <property type="project" value="UniProtKB-UniRule"/>
</dbReference>
<dbReference type="GO" id="GO:0140662">
    <property type="term" value="F:ATP-dependent protein folding chaperone"/>
    <property type="evidence" value="ECO:0007669"/>
    <property type="project" value="InterPro"/>
</dbReference>
<dbReference type="GO" id="GO:0051082">
    <property type="term" value="F:unfolded protein binding"/>
    <property type="evidence" value="ECO:0007669"/>
    <property type="project" value="InterPro"/>
</dbReference>
<dbReference type="CDD" id="cd10234">
    <property type="entry name" value="ASKHA_NBD_HSP70_DnaK-like"/>
    <property type="match status" value="1"/>
</dbReference>
<dbReference type="FunFam" id="2.60.34.10:FF:000014">
    <property type="entry name" value="Chaperone protein DnaK HSP70"/>
    <property type="match status" value="1"/>
</dbReference>
<dbReference type="FunFam" id="3.30.420.40:FF:000071">
    <property type="entry name" value="Molecular chaperone DnaK"/>
    <property type="match status" value="1"/>
</dbReference>
<dbReference type="FunFam" id="3.90.640.10:FF:000003">
    <property type="entry name" value="Molecular chaperone DnaK"/>
    <property type="match status" value="1"/>
</dbReference>
<dbReference type="Gene3D" id="1.20.1270.10">
    <property type="match status" value="1"/>
</dbReference>
<dbReference type="Gene3D" id="3.30.420.40">
    <property type="match status" value="2"/>
</dbReference>
<dbReference type="Gene3D" id="3.90.640.10">
    <property type="entry name" value="Actin, Chain A, domain 4"/>
    <property type="match status" value="1"/>
</dbReference>
<dbReference type="Gene3D" id="2.60.34.10">
    <property type="entry name" value="Substrate Binding Domain Of DNAk, Chain A, domain 1"/>
    <property type="match status" value="1"/>
</dbReference>
<dbReference type="HAMAP" id="MF_00332">
    <property type="entry name" value="DnaK"/>
    <property type="match status" value="1"/>
</dbReference>
<dbReference type="InterPro" id="IPR043129">
    <property type="entry name" value="ATPase_NBD"/>
</dbReference>
<dbReference type="InterPro" id="IPR012725">
    <property type="entry name" value="Chaperone_DnaK"/>
</dbReference>
<dbReference type="InterPro" id="IPR018181">
    <property type="entry name" value="Heat_shock_70_CS"/>
</dbReference>
<dbReference type="InterPro" id="IPR029048">
    <property type="entry name" value="HSP70_C_sf"/>
</dbReference>
<dbReference type="InterPro" id="IPR029047">
    <property type="entry name" value="HSP70_peptide-bd_sf"/>
</dbReference>
<dbReference type="InterPro" id="IPR013126">
    <property type="entry name" value="Hsp_70_fam"/>
</dbReference>
<dbReference type="NCBIfam" id="NF001413">
    <property type="entry name" value="PRK00290.1"/>
    <property type="match status" value="1"/>
</dbReference>
<dbReference type="NCBIfam" id="TIGR02350">
    <property type="entry name" value="prok_dnaK"/>
    <property type="match status" value="1"/>
</dbReference>
<dbReference type="PANTHER" id="PTHR19375">
    <property type="entry name" value="HEAT SHOCK PROTEIN 70KDA"/>
    <property type="match status" value="1"/>
</dbReference>
<dbReference type="Pfam" id="PF00012">
    <property type="entry name" value="HSP70"/>
    <property type="match status" value="1"/>
</dbReference>
<dbReference type="PRINTS" id="PR00301">
    <property type="entry name" value="HEATSHOCK70"/>
</dbReference>
<dbReference type="SUPFAM" id="SSF53067">
    <property type="entry name" value="Actin-like ATPase domain"/>
    <property type="match status" value="2"/>
</dbReference>
<dbReference type="SUPFAM" id="SSF100934">
    <property type="entry name" value="Heat shock protein 70kD (HSP70), C-terminal subdomain"/>
    <property type="match status" value="1"/>
</dbReference>
<dbReference type="SUPFAM" id="SSF100920">
    <property type="entry name" value="Heat shock protein 70kD (HSP70), peptide-binding domain"/>
    <property type="match status" value="1"/>
</dbReference>
<dbReference type="PROSITE" id="PS00297">
    <property type="entry name" value="HSP70_1"/>
    <property type="match status" value="1"/>
</dbReference>
<dbReference type="PROSITE" id="PS00329">
    <property type="entry name" value="HSP70_2"/>
    <property type="match status" value="1"/>
</dbReference>
<dbReference type="PROSITE" id="PS01036">
    <property type="entry name" value="HSP70_3"/>
    <property type="match status" value="1"/>
</dbReference>
<evidence type="ECO:0000250" key="1"/>
<evidence type="ECO:0000256" key="2">
    <source>
        <dbReference type="SAM" id="MobiDB-lite"/>
    </source>
</evidence>
<evidence type="ECO:0000305" key="3"/>
<accession>P0A3J3</accession>
<accession>P95693</accession>
<sequence>MSKIIGIDLGTTNSAVAVLEGTESKIIANPEGNRTTPSVVSFKNGEIIVGDAAKRQAVTNPDTVISIKSKMGTSEKVSANGKEYTPQEISAMILQYLKGYAEDYLGEKVEKAVITVPAYFNDAQRQATKDAGKIAGLEVERIVNEPTAAALAYGMDKTDKDEKILVFDLGGGTFDVSILELGDGVFDVLATAGDNKLGGDDFDQKIIDFLVEEFKKENGIDLSQDKMALQRLKDAAEKAKKDLSGVTQTQISLPFITAGSAGPLHLEMSLSRAKFDDLTRDLVERTKTPVRQALSDAGLSLSEIDEVILVGGSTRIPAVVEAVKAETGKEPNKSVNPDEVVAMGAAIQGGVITGDVKDVVLLDVTPLSLGIETMGGVFTKLIDRNTTIPTSKSQVFSTAADNQPAVDIHVLQGERPMAADNKTLGRFQLTDIPAAPRGIPQIEVTFDIDKNGIVSVKAKDLGTQKEQHIVIQSNSGLTDEEIDKMMKDAEANAEADAKRKEEVDLKNEVDQAIFATEKTIKETEGKGFDTERDAAQSALDELKKAQESGNLDDMKAKLEALNEKAQALAVKLYEQAAAAQQAAQGAEGAQSADSSSKGDDVVDGEFTEK</sequence>
<organism>
    <name type="scientific">Streptococcus agalactiae serotype V (strain ATCC BAA-611 / 2603 V/R)</name>
    <dbReference type="NCBI Taxonomy" id="208435"/>
    <lineage>
        <taxon>Bacteria</taxon>
        <taxon>Bacillati</taxon>
        <taxon>Bacillota</taxon>
        <taxon>Bacilli</taxon>
        <taxon>Lactobacillales</taxon>
        <taxon>Streptococcaceae</taxon>
        <taxon>Streptococcus</taxon>
    </lineage>
</organism>
<feature type="chain" id="PRO_0000078547" description="Chaperone protein DnaK">
    <location>
        <begin position="1"/>
        <end position="609"/>
    </location>
</feature>
<feature type="region of interest" description="Disordered" evidence="2">
    <location>
        <begin position="578"/>
        <end position="609"/>
    </location>
</feature>
<feature type="compositionally biased region" description="Low complexity" evidence="2">
    <location>
        <begin position="578"/>
        <end position="595"/>
    </location>
</feature>
<feature type="compositionally biased region" description="Basic and acidic residues" evidence="2">
    <location>
        <begin position="596"/>
        <end position="609"/>
    </location>
</feature>
<feature type="modified residue" description="Phosphothreonine; by autocatalysis" evidence="1">
    <location>
        <position position="173"/>
    </location>
</feature>